<reference key="1">
    <citation type="submission" date="2005-10" db="EMBL/GenBank/DDBJ databases">
        <title>Complete sequence of chromosome 2 of Burkholderia sp. 383.</title>
        <authorList>
            <consortium name="US DOE Joint Genome Institute"/>
            <person name="Copeland A."/>
            <person name="Lucas S."/>
            <person name="Lapidus A."/>
            <person name="Barry K."/>
            <person name="Detter J.C."/>
            <person name="Glavina T."/>
            <person name="Hammon N."/>
            <person name="Israni S."/>
            <person name="Pitluck S."/>
            <person name="Chain P."/>
            <person name="Malfatti S."/>
            <person name="Shin M."/>
            <person name="Vergez L."/>
            <person name="Schmutz J."/>
            <person name="Larimer F."/>
            <person name="Land M."/>
            <person name="Kyrpides N."/>
            <person name="Lykidis A."/>
            <person name="Richardson P."/>
        </authorList>
    </citation>
    <scope>NUCLEOTIDE SEQUENCE [LARGE SCALE GENOMIC DNA]</scope>
    <source>
        <strain>ATCC 17760 / DSM 23089 / LMG 22485 / NCIMB 9086 / R18194 / 383</strain>
    </source>
</reference>
<accession>Q38ZU0</accession>
<protein>
    <recommendedName>
        <fullName evidence="1">Acetoacetate decarboxylase</fullName>
        <shortName evidence="1">AAD</shortName>
        <shortName evidence="1">ADC</shortName>
        <ecNumber evidence="1">4.1.1.4</ecNumber>
    </recommendedName>
</protein>
<proteinExistence type="inferred from homology"/>
<gene>
    <name evidence="1" type="primary">adc</name>
    <name type="ordered locus">Bcep18194_B3166</name>
</gene>
<comment type="function">
    <text evidence="1">Catalyzes the conversion of acetoacetate to acetone and carbon dioxide.</text>
</comment>
<comment type="catalytic activity">
    <reaction evidence="1">
        <text>acetoacetate + H(+) = acetone + CO2</text>
        <dbReference type="Rhea" id="RHEA:19729"/>
        <dbReference type="ChEBI" id="CHEBI:13705"/>
        <dbReference type="ChEBI" id="CHEBI:15347"/>
        <dbReference type="ChEBI" id="CHEBI:15378"/>
        <dbReference type="ChEBI" id="CHEBI:16526"/>
        <dbReference type="EC" id="4.1.1.4"/>
    </reaction>
</comment>
<comment type="similarity">
    <text evidence="1">Belongs to the ADC family.</text>
</comment>
<sequence>MKPSDVRSKAFAMPLTSPAFPMGPYRFVDREFLIITYRTDPDRLREIVPEPLQVTEPLVHYEFIRMADSTGFGDYTESGQVIPVEYNGQPGGYTLAMYLDDHPPIAGGRELWGFPKKLASPTLHVNTDHILGTLDYGKVRVATGTMGYKHKELDIDEQTKRLAGPNFLLKIIPHVDGTARVCELVRYYMQDIKMKGAWTGPASLELAPHALAPVADLPVLEIVEARHLVADLTLGLGEVVYDYLAQ</sequence>
<evidence type="ECO:0000255" key="1">
    <source>
        <dbReference type="HAMAP-Rule" id="MF_00597"/>
    </source>
</evidence>
<keyword id="KW-0210">Decarboxylase</keyword>
<keyword id="KW-0456">Lyase</keyword>
<keyword id="KW-0704">Schiff base</keyword>
<organism>
    <name type="scientific">Burkholderia lata (strain ATCC 17760 / DSM 23089 / LMG 22485 / NCIMB 9086 / R18194 / 383)</name>
    <dbReference type="NCBI Taxonomy" id="482957"/>
    <lineage>
        <taxon>Bacteria</taxon>
        <taxon>Pseudomonadati</taxon>
        <taxon>Pseudomonadota</taxon>
        <taxon>Betaproteobacteria</taxon>
        <taxon>Burkholderiales</taxon>
        <taxon>Burkholderiaceae</taxon>
        <taxon>Burkholderia</taxon>
        <taxon>Burkholderia cepacia complex</taxon>
    </lineage>
</organism>
<name>ADC_BURL3</name>
<feature type="chain" id="PRO_1000025639" description="Acetoacetate decarboxylase">
    <location>
        <begin position="1"/>
        <end position="246"/>
    </location>
</feature>
<feature type="active site" description="Schiff-base intermediate with acetoacetate" evidence="1">
    <location>
        <position position="116"/>
    </location>
</feature>
<dbReference type="EC" id="4.1.1.4" evidence="1"/>
<dbReference type="EMBL" id="CP000152">
    <property type="protein sequence ID" value="ABB13276.1"/>
    <property type="molecule type" value="Genomic_DNA"/>
</dbReference>
<dbReference type="RefSeq" id="WP_009687317.1">
    <property type="nucleotide sequence ID" value="NZ_WNDV01000018.1"/>
</dbReference>
<dbReference type="SMR" id="Q38ZU0"/>
<dbReference type="KEGG" id="bur:Bcep18194_B3166"/>
<dbReference type="PATRIC" id="fig|482957.22.peg.7001"/>
<dbReference type="HOGENOM" id="CLU_077089_0_0_4"/>
<dbReference type="Proteomes" id="UP000002705">
    <property type="component" value="Chromosome 2"/>
</dbReference>
<dbReference type="GO" id="GO:0047602">
    <property type="term" value="F:acetoacetate decarboxylase activity"/>
    <property type="evidence" value="ECO:0007669"/>
    <property type="project" value="UniProtKB-UniRule"/>
</dbReference>
<dbReference type="Gene3D" id="2.40.400.10">
    <property type="entry name" value="Acetoacetate decarboxylase-like"/>
    <property type="match status" value="1"/>
</dbReference>
<dbReference type="HAMAP" id="MF_00597">
    <property type="entry name" value="ADC"/>
    <property type="match status" value="1"/>
</dbReference>
<dbReference type="InterPro" id="IPR010451">
    <property type="entry name" value="Acetoacetate_decarboxylase"/>
</dbReference>
<dbReference type="InterPro" id="IPR023653">
    <property type="entry name" value="Acetoacetate_decarboxylase_bac"/>
</dbReference>
<dbReference type="InterPro" id="IPR023375">
    <property type="entry name" value="ADC_dom_sf"/>
</dbReference>
<dbReference type="NCBIfam" id="NF002614">
    <property type="entry name" value="PRK02265.1"/>
    <property type="match status" value="1"/>
</dbReference>
<dbReference type="Pfam" id="PF06314">
    <property type="entry name" value="ADC"/>
    <property type="match status" value="1"/>
</dbReference>
<dbReference type="SUPFAM" id="SSF160104">
    <property type="entry name" value="Acetoacetate decarboxylase-like"/>
    <property type="match status" value="1"/>
</dbReference>